<name>THIE_SACEN</name>
<dbReference type="EC" id="2.5.1.3" evidence="1"/>
<dbReference type="EMBL" id="AM420293">
    <property type="protein sequence ID" value="CAL99851.1"/>
    <property type="molecule type" value="Genomic_DNA"/>
</dbReference>
<dbReference type="RefSeq" id="WP_009950944.1">
    <property type="nucleotide sequence ID" value="NC_009142.1"/>
</dbReference>
<dbReference type="SMR" id="A4F727"/>
<dbReference type="STRING" id="405948.SACE_0505"/>
<dbReference type="KEGG" id="sen:SACE_0505"/>
<dbReference type="eggNOG" id="COG0352">
    <property type="taxonomic scope" value="Bacteria"/>
</dbReference>
<dbReference type="HOGENOM" id="CLU_018272_3_0_11"/>
<dbReference type="OrthoDB" id="3243336at2"/>
<dbReference type="UniPathway" id="UPA00060">
    <property type="reaction ID" value="UER00141"/>
</dbReference>
<dbReference type="Proteomes" id="UP000006728">
    <property type="component" value="Chromosome"/>
</dbReference>
<dbReference type="GO" id="GO:0005737">
    <property type="term" value="C:cytoplasm"/>
    <property type="evidence" value="ECO:0007669"/>
    <property type="project" value="TreeGrafter"/>
</dbReference>
<dbReference type="GO" id="GO:0000287">
    <property type="term" value="F:magnesium ion binding"/>
    <property type="evidence" value="ECO:0007669"/>
    <property type="project" value="UniProtKB-UniRule"/>
</dbReference>
<dbReference type="GO" id="GO:0004789">
    <property type="term" value="F:thiamine-phosphate diphosphorylase activity"/>
    <property type="evidence" value="ECO:0007669"/>
    <property type="project" value="UniProtKB-UniRule"/>
</dbReference>
<dbReference type="GO" id="GO:0009228">
    <property type="term" value="P:thiamine biosynthetic process"/>
    <property type="evidence" value="ECO:0007669"/>
    <property type="project" value="UniProtKB-KW"/>
</dbReference>
<dbReference type="GO" id="GO:0009229">
    <property type="term" value="P:thiamine diphosphate biosynthetic process"/>
    <property type="evidence" value="ECO:0007669"/>
    <property type="project" value="UniProtKB-UniRule"/>
</dbReference>
<dbReference type="CDD" id="cd00564">
    <property type="entry name" value="TMP_TenI"/>
    <property type="match status" value="1"/>
</dbReference>
<dbReference type="FunFam" id="3.20.20.70:FF:000178">
    <property type="entry name" value="Thiamine-phosphate synthase"/>
    <property type="match status" value="1"/>
</dbReference>
<dbReference type="Gene3D" id="3.20.20.70">
    <property type="entry name" value="Aldolase class I"/>
    <property type="match status" value="1"/>
</dbReference>
<dbReference type="HAMAP" id="MF_00097">
    <property type="entry name" value="TMP_synthase"/>
    <property type="match status" value="1"/>
</dbReference>
<dbReference type="InterPro" id="IPR013785">
    <property type="entry name" value="Aldolase_TIM"/>
</dbReference>
<dbReference type="InterPro" id="IPR036206">
    <property type="entry name" value="ThiamineP_synth_sf"/>
</dbReference>
<dbReference type="InterPro" id="IPR022998">
    <property type="entry name" value="ThiamineP_synth_TenI"/>
</dbReference>
<dbReference type="InterPro" id="IPR034291">
    <property type="entry name" value="TMP_synthase"/>
</dbReference>
<dbReference type="NCBIfam" id="TIGR00693">
    <property type="entry name" value="thiE"/>
    <property type="match status" value="1"/>
</dbReference>
<dbReference type="PANTHER" id="PTHR20857">
    <property type="entry name" value="THIAMINE-PHOSPHATE PYROPHOSPHORYLASE"/>
    <property type="match status" value="1"/>
</dbReference>
<dbReference type="PANTHER" id="PTHR20857:SF15">
    <property type="entry name" value="THIAMINE-PHOSPHATE SYNTHASE"/>
    <property type="match status" value="1"/>
</dbReference>
<dbReference type="Pfam" id="PF02581">
    <property type="entry name" value="TMP-TENI"/>
    <property type="match status" value="1"/>
</dbReference>
<dbReference type="SUPFAM" id="SSF51391">
    <property type="entry name" value="Thiamin phosphate synthase"/>
    <property type="match status" value="1"/>
</dbReference>
<proteinExistence type="inferred from homology"/>
<protein>
    <recommendedName>
        <fullName evidence="1">Thiamine-phosphate synthase</fullName>
        <shortName evidence="1">TP synthase</shortName>
        <shortName evidence="1">TPS</shortName>
        <ecNumber evidence="1">2.5.1.3</ecNumber>
    </recommendedName>
    <alternativeName>
        <fullName evidence="1">Thiamine-phosphate pyrophosphorylase</fullName>
        <shortName evidence="1">TMP pyrophosphorylase</shortName>
        <shortName evidence="1">TMP-PPase</shortName>
    </alternativeName>
</protein>
<organism>
    <name type="scientific">Saccharopolyspora erythraea (strain ATCC 11635 / DSM 40517 / JCM 4748 / NBRC 13426 / NCIMB 8594 / NRRL 2338)</name>
    <dbReference type="NCBI Taxonomy" id="405948"/>
    <lineage>
        <taxon>Bacteria</taxon>
        <taxon>Bacillati</taxon>
        <taxon>Actinomycetota</taxon>
        <taxon>Actinomycetes</taxon>
        <taxon>Pseudonocardiales</taxon>
        <taxon>Pseudonocardiaceae</taxon>
        <taxon>Saccharopolyspora</taxon>
    </lineage>
</organism>
<reference key="1">
    <citation type="journal article" date="2007" name="Nat. Biotechnol.">
        <title>Complete genome sequence of the erythromycin-producing bacterium Saccharopolyspora erythraea NRRL23338.</title>
        <authorList>
            <person name="Oliynyk M."/>
            <person name="Samborskyy M."/>
            <person name="Lester J.B."/>
            <person name="Mironenko T."/>
            <person name="Scott N."/>
            <person name="Dickens S."/>
            <person name="Haydock S.F."/>
            <person name="Leadlay P.F."/>
        </authorList>
    </citation>
    <scope>NUCLEOTIDE SEQUENCE [LARGE SCALE GENOMIC DNA]</scope>
    <source>
        <strain>ATCC 11635 / DSM 40517 / JCM 4748 / NBRC 13426 / NCIMB 8594 / NRRL 2338</strain>
    </source>
</reference>
<evidence type="ECO:0000255" key="1">
    <source>
        <dbReference type="HAMAP-Rule" id="MF_00097"/>
    </source>
</evidence>
<gene>
    <name evidence="1" type="primary">thiE</name>
    <name type="ordered locus">SACE_0505</name>
</gene>
<sequence length="223" mass="23581">MPGLDGFGIRARLEEALLYLCTDARTERGDLAEFADAALDGGVDIIQLRDKSAGGAPLEARHELAALEVLAEACVRHGALLAVNDRADVAMAADADVLHLGQDDLPVELARRIVGDQVVVGRSTHDVVQADSAATEQGVDYFCTGPVWTTPTKPGREAAGLELVRHTAEHRGHGRPWFAIGGIGMDNIDEVVQAGARRVVVVRAITEAEDPRAAAAALRTKLG</sequence>
<keyword id="KW-0460">Magnesium</keyword>
<keyword id="KW-0479">Metal-binding</keyword>
<keyword id="KW-1185">Reference proteome</keyword>
<keyword id="KW-0784">Thiamine biosynthesis</keyword>
<keyword id="KW-0808">Transferase</keyword>
<accession>A4F727</accession>
<comment type="function">
    <text evidence="1">Condenses 4-methyl-5-(beta-hydroxyethyl)thiazole monophosphate (THZ-P) and 2-methyl-4-amino-5-hydroxymethyl pyrimidine pyrophosphate (HMP-PP) to form thiamine monophosphate (TMP).</text>
</comment>
<comment type="catalytic activity">
    <reaction evidence="1">
        <text>2-[(2R,5Z)-2-carboxy-4-methylthiazol-5(2H)-ylidene]ethyl phosphate + 4-amino-2-methyl-5-(diphosphooxymethyl)pyrimidine + 2 H(+) = thiamine phosphate + CO2 + diphosphate</text>
        <dbReference type="Rhea" id="RHEA:47844"/>
        <dbReference type="ChEBI" id="CHEBI:15378"/>
        <dbReference type="ChEBI" id="CHEBI:16526"/>
        <dbReference type="ChEBI" id="CHEBI:33019"/>
        <dbReference type="ChEBI" id="CHEBI:37575"/>
        <dbReference type="ChEBI" id="CHEBI:57841"/>
        <dbReference type="ChEBI" id="CHEBI:62899"/>
        <dbReference type="EC" id="2.5.1.3"/>
    </reaction>
</comment>
<comment type="catalytic activity">
    <reaction evidence="1">
        <text>2-(2-carboxy-4-methylthiazol-5-yl)ethyl phosphate + 4-amino-2-methyl-5-(diphosphooxymethyl)pyrimidine + 2 H(+) = thiamine phosphate + CO2 + diphosphate</text>
        <dbReference type="Rhea" id="RHEA:47848"/>
        <dbReference type="ChEBI" id="CHEBI:15378"/>
        <dbReference type="ChEBI" id="CHEBI:16526"/>
        <dbReference type="ChEBI" id="CHEBI:33019"/>
        <dbReference type="ChEBI" id="CHEBI:37575"/>
        <dbReference type="ChEBI" id="CHEBI:57841"/>
        <dbReference type="ChEBI" id="CHEBI:62890"/>
        <dbReference type="EC" id="2.5.1.3"/>
    </reaction>
</comment>
<comment type="catalytic activity">
    <reaction evidence="1">
        <text>4-methyl-5-(2-phosphooxyethyl)-thiazole + 4-amino-2-methyl-5-(diphosphooxymethyl)pyrimidine + H(+) = thiamine phosphate + diphosphate</text>
        <dbReference type="Rhea" id="RHEA:22328"/>
        <dbReference type="ChEBI" id="CHEBI:15378"/>
        <dbReference type="ChEBI" id="CHEBI:33019"/>
        <dbReference type="ChEBI" id="CHEBI:37575"/>
        <dbReference type="ChEBI" id="CHEBI:57841"/>
        <dbReference type="ChEBI" id="CHEBI:58296"/>
        <dbReference type="EC" id="2.5.1.3"/>
    </reaction>
</comment>
<comment type="cofactor">
    <cofactor evidence="1">
        <name>Mg(2+)</name>
        <dbReference type="ChEBI" id="CHEBI:18420"/>
    </cofactor>
    <text evidence="1">Binds 1 Mg(2+) ion per subunit.</text>
</comment>
<comment type="pathway">
    <text evidence="1">Cofactor biosynthesis; thiamine diphosphate biosynthesis; thiamine phosphate from 4-amino-2-methyl-5-diphosphomethylpyrimidine and 4-methyl-5-(2-phosphoethyl)-thiazole: step 1/1.</text>
</comment>
<comment type="similarity">
    <text evidence="1">Belongs to the thiamine-phosphate synthase family.</text>
</comment>
<feature type="chain" id="PRO_1000008167" description="Thiamine-phosphate synthase">
    <location>
        <begin position="1"/>
        <end position="223"/>
    </location>
</feature>
<feature type="binding site" evidence="1">
    <location>
        <begin position="47"/>
        <end position="51"/>
    </location>
    <ligand>
        <name>4-amino-2-methyl-5-(diphosphooxymethyl)pyrimidine</name>
        <dbReference type="ChEBI" id="CHEBI:57841"/>
    </ligand>
</feature>
<feature type="binding site" evidence="1">
    <location>
        <position position="84"/>
    </location>
    <ligand>
        <name>4-amino-2-methyl-5-(diphosphooxymethyl)pyrimidine</name>
        <dbReference type="ChEBI" id="CHEBI:57841"/>
    </ligand>
</feature>
<feature type="binding site" evidence="1">
    <location>
        <position position="85"/>
    </location>
    <ligand>
        <name>Mg(2+)</name>
        <dbReference type="ChEBI" id="CHEBI:18420"/>
    </ligand>
</feature>
<feature type="binding site" evidence="1">
    <location>
        <position position="104"/>
    </location>
    <ligand>
        <name>Mg(2+)</name>
        <dbReference type="ChEBI" id="CHEBI:18420"/>
    </ligand>
</feature>
<feature type="binding site" evidence="1">
    <location>
        <position position="123"/>
    </location>
    <ligand>
        <name>4-amino-2-methyl-5-(diphosphooxymethyl)pyrimidine</name>
        <dbReference type="ChEBI" id="CHEBI:57841"/>
    </ligand>
</feature>
<feature type="binding site" evidence="1">
    <location>
        <begin position="150"/>
        <end position="152"/>
    </location>
    <ligand>
        <name>2-[(2R,5Z)-2-carboxy-4-methylthiazol-5(2H)-ylidene]ethyl phosphate</name>
        <dbReference type="ChEBI" id="CHEBI:62899"/>
    </ligand>
</feature>
<feature type="binding site" evidence="1">
    <location>
        <position position="153"/>
    </location>
    <ligand>
        <name>4-amino-2-methyl-5-(diphosphooxymethyl)pyrimidine</name>
        <dbReference type="ChEBI" id="CHEBI:57841"/>
    </ligand>
</feature>
<feature type="binding site" evidence="1">
    <location>
        <position position="182"/>
    </location>
    <ligand>
        <name>2-[(2R,5Z)-2-carboxy-4-methylthiazol-5(2H)-ylidene]ethyl phosphate</name>
        <dbReference type="ChEBI" id="CHEBI:62899"/>
    </ligand>
</feature>